<feature type="chain" id="PRO_0000336457" description="Dihydroorotate dehydrogenase (quinone)">
    <location>
        <begin position="1"/>
        <end position="345"/>
    </location>
</feature>
<feature type="active site" description="Nucleophile" evidence="1">
    <location>
        <position position="178"/>
    </location>
</feature>
<feature type="binding site" evidence="1">
    <location>
        <begin position="65"/>
        <end position="69"/>
    </location>
    <ligand>
        <name>FMN</name>
        <dbReference type="ChEBI" id="CHEBI:58210"/>
    </ligand>
</feature>
<feature type="binding site" evidence="1">
    <location>
        <position position="69"/>
    </location>
    <ligand>
        <name>substrate</name>
    </ligand>
</feature>
<feature type="binding site" evidence="1">
    <location>
        <position position="89"/>
    </location>
    <ligand>
        <name>FMN</name>
        <dbReference type="ChEBI" id="CHEBI:58210"/>
    </ligand>
</feature>
<feature type="binding site" evidence="1">
    <location>
        <begin position="114"/>
        <end position="118"/>
    </location>
    <ligand>
        <name>substrate</name>
    </ligand>
</feature>
<feature type="binding site" evidence="1">
    <location>
        <position position="142"/>
    </location>
    <ligand>
        <name>FMN</name>
        <dbReference type="ChEBI" id="CHEBI:58210"/>
    </ligand>
</feature>
<feature type="binding site" evidence="1">
    <location>
        <position position="175"/>
    </location>
    <ligand>
        <name>FMN</name>
        <dbReference type="ChEBI" id="CHEBI:58210"/>
    </ligand>
</feature>
<feature type="binding site" evidence="1">
    <location>
        <position position="175"/>
    </location>
    <ligand>
        <name>substrate</name>
    </ligand>
</feature>
<feature type="binding site" evidence="1">
    <location>
        <position position="180"/>
    </location>
    <ligand>
        <name>substrate</name>
    </ligand>
</feature>
<feature type="binding site" evidence="1">
    <location>
        <position position="220"/>
    </location>
    <ligand>
        <name>FMN</name>
        <dbReference type="ChEBI" id="CHEBI:58210"/>
    </ligand>
</feature>
<feature type="binding site" evidence="1">
    <location>
        <position position="248"/>
    </location>
    <ligand>
        <name>FMN</name>
        <dbReference type="ChEBI" id="CHEBI:58210"/>
    </ligand>
</feature>
<feature type="binding site" evidence="1">
    <location>
        <begin position="249"/>
        <end position="250"/>
    </location>
    <ligand>
        <name>substrate</name>
    </ligand>
</feature>
<feature type="binding site" evidence="1">
    <location>
        <position position="271"/>
    </location>
    <ligand>
        <name>FMN</name>
        <dbReference type="ChEBI" id="CHEBI:58210"/>
    </ligand>
</feature>
<feature type="binding site" evidence="1">
    <location>
        <position position="300"/>
    </location>
    <ligand>
        <name>FMN</name>
        <dbReference type="ChEBI" id="CHEBI:58210"/>
    </ligand>
</feature>
<feature type="binding site" evidence="1">
    <location>
        <begin position="321"/>
        <end position="322"/>
    </location>
    <ligand>
        <name>FMN</name>
        <dbReference type="ChEBI" id="CHEBI:58210"/>
    </ligand>
</feature>
<reference key="1">
    <citation type="submission" date="2006-05" db="EMBL/GenBank/DDBJ databases">
        <title>Complete sequence of chromosome 1 of Burkholderia cenocepacia AU 1054.</title>
        <authorList>
            <consortium name="US DOE Joint Genome Institute"/>
            <person name="Copeland A."/>
            <person name="Lucas S."/>
            <person name="Lapidus A."/>
            <person name="Barry K."/>
            <person name="Detter J.C."/>
            <person name="Glavina del Rio T."/>
            <person name="Hammon N."/>
            <person name="Israni S."/>
            <person name="Dalin E."/>
            <person name="Tice H."/>
            <person name="Pitluck S."/>
            <person name="Chain P."/>
            <person name="Malfatti S."/>
            <person name="Shin M."/>
            <person name="Vergez L."/>
            <person name="Schmutz J."/>
            <person name="Larimer F."/>
            <person name="Land M."/>
            <person name="Hauser L."/>
            <person name="Kyrpides N."/>
            <person name="Lykidis A."/>
            <person name="LiPuma J.J."/>
            <person name="Konstantinidis K."/>
            <person name="Tiedje J.M."/>
            <person name="Richardson P."/>
        </authorList>
    </citation>
    <scope>NUCLEOTIDE SEQUENCE [LARGE SCALE GENOMIC DNA]</scope>
    <source>
        <strain>AU 1054</strain>
    </source>
</reference>
<proteinExistence type="inferred from homology"/>
<gene>
    <name evidence="1" type="primary">pyrD</name>
    <name type="ordered locus">Bcen_1074</name>
</gene>
<protein>
    <recommendedName>
        <fullName evidence="1">Dihydroorotate dehydrogenase (quinone)</fullName>
        <ecNumber evidence="1">1.3.5.2</ecNumber>
    </recommendedName>
    <alternativeName>
        <fullName evidence="1">DHOdehase</fullName>
        <shortName evidence="1">DHOD</shortName>
        <shortName evidence="1">DHODase</shortName>
    </alternativeName>
    <alternativeName>
        <fullName evidence="1">Dihydroorotate oxidase</fullName>
    </alternativeName>
</protein>
<dbReference type="EC" id="1.3.5.2" evidence="1"/>
<dbReference type="EMBL" id="CP000378">
    <property type="protein sequence ID" value="ABF75981.1"/>
    <property type="status" value="ALT_INIT"/>
    <property type="molecule type" value="Genomic_DNA"/>
</dbReference>
<dbReference type="SMR" id="Q1BWM4"/>
<dbReference type="HOGENOM" id="CLU_013640_2_0_4"/>
<dbReference type="UniPathway" id="UPA00070">
    <property type="reaction ID" value="UER00946"/>
</dbReference>
<dbReference type="GO" id="GO:0005737">
    <property type="term" value="C:cytoplasm"/>
    <property type="evidence" value="ECO:0007669"/>
    <property type="project" value="InterPro"/>
</dbReference>
<dbReference type="GO" id="GO:0005886">
    <property type="term" value="C:plasma membrane"/>
    <property type="evidence" value="ECO:0007669"/>
    <property type="project" value="UniProtKB-SubCell"/>
</dbReference>
<dbReference type="GO" id="GO:0106430">
    <property type="term" value="F:dihydroorotate dehydrogenase (quinone) activity"/>
    <property type="evidence" value="ECO:0007669"/>
    <property type="project" value="UniProtKB-EC"/>
</dbReference>
<dbReference type="GO" id="GO:0006207">
    <property type="term" value="P:'de novo' pyrimidine nucleobase biosynthetic process"/>
    <property type="evidence" value="ECO:0007669"/>
    <property type="project" value="InterPro"/>
</dbReference>
<dbReference type="GO" id="GO:0044205">
    <property type="term" value="P:'de novo' UMP biosynthetic process"/>
    <property type="evidence" value="ECO:0007669"/>
    <property type="project" value="UniProtKB-UniRule"/>
</dbReference>
<dbReference type="CDD" id="cd04738">
    <property type="entry name" value="DHOD_2_like"/>
    <property type="match status" value="1"/>
</dbReference>
<dbReference type="FunFam" id="3.20.20.70:FF:000028">
    <property type="entry name" value="Dihydroorotate dehydrogenase (quinone)"/>
    <property type="match status" value="1"/>
</dbReference>
<dbReference type="Gene3D" id="3.20.20.70">
    <property type="entry name" value="Aldolase class I"/>
    <property type="match status" value="1"/>
</dbReference>
<dbReference type="HAMAP" id="MF_00225">
    <property type="entry name" value="DHO_dh_type2"/>
    <property type="match status" value="1"/>
</dbReference>
<dbReference type="InterPro" id="IPR013785">
    <property type="entry name" value="Aldolase_TIM"/>
</dbReference>
<dbReference type="InterPro" id="IPR050074">
    <property type="entry name" value="DHO_dehydrogenase"/>
</dbReference>
<dbReference type="InterPro" id="IPR012135">
    <property type="entry name" value="Dihydroorotate_DH_1_2"/>
</dbReference>
<dbReference type="InterPro" id="IPR005719">
    <property type="entry name" value="Dihydroorotate_DH_2"/>
</dbReference>
<dbReference type="InterPro" id="IPR005720">
    <property type="entry name" value="Dihydroorotate_DH_cat"/>
</dbReference>
<dbReference type="InterPro" id="IPR001295">
    <property type="entry name" value="Dihydroorotate_DH_CS"/>
</dbReference>
<dbReference type="NCBIfam" id="NF003644">
    <property type="entry name" value="PRK05286.1-1"/>
    <property type="match status" value="1"/>
</dbReference>
<dbReference type="NCBIfam" id="NF003645">
    <property type="entry name" value="PRK05286.1-2"/>
    <property type="match status" value="1"/>
</dbReference>
<dbReference type="NCBIfam" id="NF003646">
    <property type="entry name" value="PRK05286.1-4"/>
    <property type="match status" value="1"/>
</dbReference>
<dbReference type="NCBIfam" id="NF003652">
    <property type="entry name" value="PRK05286.2-5"/>
    <property type="match status" value="1"/>
</dbReference>
<dbReference type="NCBIfam" id="TIGR01036">
    <property type="entry name" value="pyrD_sub2"/>
    <property type="match status" value="1"/>
</dbReference>
<dbReference type="PANTHER" id="PTHR48109:SF4">
    <property type="entry name" value="DIHYDROOROTATE DEHYDROGENASE (QUINONE), MITOCHONDRIAL"/>
    <property type="match status" value="1"/>
</dbReference>
<dbReference type="PANTHER" id="PTHR48109">
    <property type="entry name" value="DIHYDROOROTATE DEHYDROGENASE (QUINONE), MITOCHONDRIAL-RELATED"/>
    <property type="match status" value="1"/>
</dbReference>
<dbReference type="Pfam" id="PF01180">
    <property type="entry name" value="DHO_dh"/>
    <property type="match status" value="1"/>
</dbReference>
<dbReference type="PIRSF" id="PIRSF000164">
    <property type="entry name" value="DHO_oxidase"/>
    <property type="match status" value="1"/>
</dbReference>
<dbReference type="SUPFAM" id="SSF51395">
    <property type="entry name" value="FMN-linked oxidoreductases"/>
    <property type="match status" value="1"/>
</dbReference>
<dbReference type="PROSITE" id="PS00911">
    <property type="entry name" value="DHODEHASE_1"/>
    <property type="match status" value="1"/>
</dbReference>
<dbReference type="PROSITE" id="PS00912">
    <property type="entry name" value="DHODEHASE_2"/>
    <property type="match status" value="1"/>
</dbReference>
<organism>
    <name type="scientific">Burkholderia orbicola (strain AU 1054)</name>
    <dbReference type="NCBI Taxonomy" id="331271"/>
    <lineage>
        <taxon>Bacteria</taxon>
        <taxon>Pseudomonadati</taxon>
        <taxon>Pseudomonadota</taxon>
        <taxon>Betaproteobacteria</taxon>
        <taxon>Burkholderiales</taxon>
        <taxon>Burkholderiaceae</taxon>
        <taxon>Burkholderia</taxon>
        <taxon>Burkholderia cepacia complex</taxon>
        <taxon>Burkholderia orbicola</taxon>
    </lineage>
</organism>
<accession>Q1BWM4</accession>
<name>PYRD_BURO1</name>
<sequence length="345" mass="36756">MFSSLYPLARASLFKMDAEDAHHLTLRALGAAGRTGLACALSARVPDAPRTVMGLTFRNPVGLAAGLDKDGAAIDGLAALGFGFIEVGTVTPRPQPGNPRPRMFRLPQAEALINRMGFNNHGVDQFVKNVQAARYRGILGLNIGKNADTPIERAAEDYLYCLERVYPFASYVTINISSPNTKNLRQLQGAGELDALLAALKDKQQRLADLHGKLVPLALKIAPDLDDEQVKEIGDTLLRHKIEAVIATNTTLSRAAVQGLPHADEAGGLSGRPVFDASNEVIRKLHAEVGNDVPIIGVGGIFSGEDAHAKLAAGAALVQLYTGFIYRGPALVSECVKAIARERSA</sequence>
<keyword id="KW-1003">Cell membrane</keyword>
<keyword id="KW-0285">Flavoprotein</keyword>
<keyword id="KW-0288">FMN</keyword>
<keyword id="KW-0472">Membrane</keyword>
<keyword id="KW-0560">Oxidoreductase</keyword>
<keyword id="KW-0665">Pyrimidine biosynthesis</keyword>
<comment type="function">
    <text evidence="1">Catalyzes the conversion of dihydroorotate to orotate with quinone as electron acceptor.</text>
</comment>
<comment type="catalytic activity">
    <reaction evidence="1">
        <text>(S)-dihydroorotate + a quinone = orotate + a quinol</text>
        <dbReference type="Rhea" id="RHEA:30187"/>
        <dbReference type="ChEBI" id="CHEBI:24646"/>
        <dbReference type="ChEBI" id="CHEBI:30839"/>
        <dbReference type="ChEBI" id="CHEBI:30864"/>
        <dbReference type="ChEBI" id="CHEBI:132124"/>
        <dbReference type="EC" id="1.3.5.2"/>
    </reaction>
</comment>
<comment type="cofactor">
    <cofactor evidence="1">
        <name>FMN</name>
        <dbReference type="ChEBI" id="CHEBI:58210"/>
    </cofactor>
    <text evidence="1">Binds 1 FMN per subunit.</text>
</comment>
<comment type="pathway">
    <text evidence="1">Pyrimidine metabolism; UMP biosynthesis via de novo pathway; orotate from (S)-dihydroorotate (quinone route): step 1/1.</text>
</comment>
<comment type="subunit">
    <text evidence="1">Monomer.</text>
</comment>
<comment type="subcellular location">
    <subcellularLocation>
        <location evidence="1">Cell membrane</location>
        <topology evidence="1">Peripheral membrane protein</topology>
    </subcellularLocation>
</comment>
<comment type="similarity">
    <text evidence="1">Belongs to the dihydroorotate dehydrogenase family. Type 2 subfamily.</text>
</comment>
<comment type="sequence caution" evidence="2">
    <conflict type="erroneous initiation">
        <sequence resource="EMBL-CDS" id="ABF75981"/>
    </conflict>
</comment>
<evidence type="ECO:0000255" key="1">
    <source>
        <dbReference type="HAMAP-Rule" id="MF_00225"/>
    </source>
</evidence>
<evidence type="ECO:0000305" key="2"/>